<proteinExistence type="evidence at transcript level"/>
<feature type="chain" id="PRO_0000081515" description="Cytoplasmic polyadenylation element-binding protein 2">
    <location>
        <begin position="1"/>
        <end position="571"/>
    </location>
</feature>
<feature type="domain" description="RRM" evidence="2">
    <location>
        <begin position="435"/>
        <end position="517"/>
    </location>
</feature>
<feature type="region of interest" description="Disordered" evidence="3">
    <location>
        <begin position="1"/>
        <end position="23"/>
    </location>
</feature>
<feature type="region of interest" description="Disordered" evidence="3">
    <location>
        <begin position="51"/>
        <end position="75"/>
    </location>
</feature>
<feature type="compositionally biased region" description="Basic and acidic residues" evidence="3">
    <location>
        <begin position="61"/>
        <end position="75"/>
    </location>
</feature>
<dbReference type="EMBL" id="AY589619">
    <property type="protein sequence ID" value="AAT72420.1"/>
    <property type="molecule type" value="Genomic_DNA"/>
</dbReference>
<dbReference type="EMBL" id="AY589612">
    <property type="protein sequence ID" value="AAT72449.1"/>
    <property type="molecule type" value="mRNA"/>
</dbReference>
<dbReference type="RefSeq" id="XP_003113633.1">
    <property type="nucleotide sequence ID" value="XM_003113585.1"/>
</dbReference>
<dbReference type="SMR" id="Q6E3F2"/>
<dbReference type="EnsemblMetazoa" id="CRE26234.1">
    <property type="protein sequence ID" value="CRE26234.1"/>
    <property type="gene ID" value="WBGene00054149"/>
</dbReference>
<dbReference type="KEGG" id="crq:GCK72_006323"/>
<dbReference type="CTD" id="9815290"/>
<dbReference type="eggNOG" id="KOG0129">
    <property type="taxonomic scope" value="Eukaryota"/>
</dbReference>
<dbReference type="HOGENOM" id="CLU_034584_0_0_1"/>
<dbReference type="OMA" id="DWPSKHY"/>
<dbReference type="OrthoDB" id="10033548at2759"/>
<dbReference type="GO" id="GO:0005737">
    <property type="term" value="C:cytoplasm"/>
    <property type="evidence" value="ECO:0007669"/>
    <property type="project" value="TreeGrafter"/>
</dbReference>
<dbReference type="GO" id="GO:0005634">
    <property type="term" value="C:nucleus"/>
    <property type="evidence" value="ECO:0007669"/>
    <property type="project" value="TreeGrafter"/>
</dbReference>
<dbReference type="GO" id="GO:0003730">
    <property type="term" value="F:mRNA 3'-UTR binding"/>
    <property type="evidence" value="ECO:0007669"/>
    <property type="project" value="InterPro"/>
</dbReference>
<dbReference type="GO" id="GO:0000900">
    <property type="term" value="F:mRNA regulatory element binding translation repressor activity"/>
    <property type="evidence" value="ECO:0007669"/>
    <property type="project" value="TreeGrafter"/>
</dbReference>
<dbReference type="GO" id="GO:0043022">
    <property type="term" value="F:ribosome binding"/>
    <property type="evidence" value="ECO:0007669"/>
    <property type="project" value="TreeGrafter"/>
</dbReference>
<dbReference type="GO" id="GO:0008135">
    <property type="term" value="F:translation factor activity, RNA binding"/>
    <property type="evidence" value="ECO:0007669"/>
    <property type="project" value="TreeGrafter"/>
</dbReference>
<dbReference type="GO" id="GO:2000766">
    <property type="term" value="P:negative regulation of cytoplasmic translation"/>
    <property type="evidence" value="ECO:0007669"/>
    <property type="project" value="TreeGrafter"/>
</dbReference>
<dbReference type="CDD" id="cd19757">
    <property type="entry name" value="Bbox1"/>
    <property type="match status" value="1"/>
</dbReference>
<dbReference type="CDD" id="cd12726">
    <property type="entry name" value="RRM2_CPEB2_like"/>
    <property type="match status" value="1"/>
</dbReference>
<dbReference type="FunFam" id="3.30.70.330:FF:000483">
    <property type="entry name" value="Cytoplasmic polyadenylation element-binding protein 2"/>
    <property type="match status" value="1"/>
</dbReference>
<dbReference type="Gene3D" id="3.30.70.330">
    <property type="match status" value="2"/>
</dbReference>
<dbReference type="Gene3D" id="4.10.640.40">
    <property type="entry name" value="Cytoplasmic polyadenylation element-binding protein, ZZ domain"/>
    <property type="match status" value="1"/>
</dbReference>
<dbReference type="InterPro" id="IPR032296">
    <property type="entry name" value="CEBP_ZZ"/>
</dbReference>
<dbReference type="InterPro" id="IPR038446">
    <property type="entry name" value="CEBP_ZZ_sf"/>
</dbReference>
<dbReference type="InterPro" id="IPR034819">
    <property type="entry name" value="CPEB"/>
</dbReference>
<dbReference type="InterPro" id="IPR012677">
    <property type="entry name" value="Nucleotide-bd_a/b_plait_sf"/>
</dbReference>
<dbReference type="InterPro" id="IPR035979">
    <property type="entry name" value="RBD_domain_sf"/>
</dbReference>
<dbReference type="InterPro" id="IPR000504">
    <property type="entry name" value="RRM_dom"/>
</dbReference>
<dbReference type="PANTHER" id="PTHR12566">
    <property type="entry name" value="CYTOPLASMIC POLYADENYLATION ELEMENT BINDING PROTEIN CPEB"/>
    <property type="match status" value="1"/>
</dbReference>
<dbReference type="PANTHER" id="PTHR12566:SF12">
    <property type="entry name" value="TRANSLATIONAL REGULATOR ORB2"/>
    <property type="match status" value="1"/>
</dbReference>
<dbReference type="Pfam" id="PF16366">
    <property type="entry name" value="CEBP_ZZ"/>
    <property type="match status" value="1"/>
</dbReference>
<dbReference type="Pfam" id="PF16367">
    <property type="entry name" value="RRM_7"/>
    <property type="match status" value="2"/>
</dbReference>
<dbReference type="SMART" id="SM00360">
    <property type="entry name" value="RRM"/>
    <property type="match status" value="2"/>
</dbReference>
<dbReference type="SUPFAM" id="SSF54928">
    <property type="entry name" value="RNA-binding domain, RBD"/>
    <property type="match status" value="2"/>
</dbReference>
<dbReference type="PROSITE" id="PS50102">
    <property type="entry name" value="RRM"/>
    <property type="match status" value="1"/>
</dbReference>
<organism>
    <name type="scientific">Caenorhabditis remanei</name>
    <name type="common">Caenorhabditis vulgaris</name>
    <dbReference type="NCBI Taxonomy" id="31234"/>
    <lineage>
        <taxon>Eukaryota</taxon>
        <taxon>Metazoa</taxon>
        <taxon>Ecdysozoa</taxon>
        <taxon>Nematoda</taxon>
        <taxon>Chromadorea</taxon>
        <taxon>Rhabditida</taxon>
        <taxon>Rhabditina</taxon>
        <taxon>Rhabditomorpha</taxon>
        <taxon>Rhabditoidea</taxon>
        <taxon>Rhabditidae</taxon>
        <taxon>Peloderinae</taxon>
        <taxon>Caenorhabditis</taxon>
    </lineage>
</organism>
<accession>Q6E3F2</accession>
<protein>
    <recommendedName>
        <fullName>Cytoplasmic polyadenylation element-binding protein 2</fullName>
    </recommendedName>
</protein>
<reference key="1">
    <citation type="journal article" date="2004" name="Genome Res.">
        <title>A phylogeny of Caenorhabditis reveals frequent loss of introns during nematode evolution.</title>
        <authorList>
            <person name="Cho S."/>
            <person name="Jin S.W."/>
            <person name="Cohen A."/>
            <person name="Ellis R.E."/>
        </authorList>
    </citation>
    <scope>NUCLEOTIDE SEQUENCE [GENOMIC DNA / MRNA]</scope>
</reference>
<evidence type="ECO:0000250" key="1"/>
<evidence type="ECO:0000255" key="2">
    <source>
        <dbReference type="PROSITE-ProRule" id="PRU00176"/>
    </source>
</evidence>
<evidence type="ECO:0000256" key="3">
    <source>
        <dbReference type="SAM" id="MobiDB-lite"/>
    </source>
</evidence>
<sequence>MSKSRRLFLSMQGDDDFWGNGDRLEEKKLPSIKQEKSKVMDDEDLEDRYYFKQNKLGRQQSESRHENEENKVSQEEKWNLRVPLEESILIKKEEPVPEMEESETIIASEEEQLLETSPSVDTNEEFYNNYRNYFQRRPEVIFLIRSMDENAVENYDKEFIDLYEKTRKSLEVCPNPELNQILRCECSSNTSTANSDNRLPNNHAVVVSNFREPDRRLGRYSKYYYHHNVGPEVYSRKVFVGGLPGCVKESDILNFFSRYGRLQVDWPSKHFGCKSDSDPSVCGDATSSFQQTSHLAMSSPPFGQINPFMSDHSTTSSETQNFGMNRNGNGGGVITHGMVRMMNAARNAGFGGGEPRSVGGESSEEKKQHHLGYVFLLFEKERSVRELVSDCFEEEEGLFITLESSIEPIRVQIRPWLLADAEFLMDFNVPINTKLVAFIGGVPRPLKAVELAHFFEQTYGNVVCVGIDIDNKFKYPRGSGRVAFSNYDAYVQAITDRYIVLDHEDIHKRVEIKPYFFHNQSCEECSSRYNRQYAPFFCPSLECFQYYCEPCWHKMHSHPSRFHHMPVVKGI</sequence>
<gene>
    <name type="primary">cpb-2</name>
</gene>
<name>CPB2_CAERE</name>
<comment type="function">
    <text evidence="1">Cytoplasmic polyadenylation element binding protein that binds to and regulates the translation of specific mRNAs.</text>
</comment>
<keyword id="KW-0694">RNA-binding</keyword>